<accession>A2SLD8</accession>
<name>RL15_METPP</name>
<keyword id="KW-1185">Reference proteome</keyword>
<keyword id="KW-0687">Ribonucleoprotein</keyword>
<keyword id="KW-0689">Ribosomal protein</keyword>
<keyword id="KW-0694">RNA-binding</keyword>
<keyword id="KW-0699">rRNA-binding</keyword>
<proteinExistence type="inferred from homology"/>
<organism>
    <name type="scientific">Methylibium petroleiphilum (strain ATCC BAA-1232 / LMG 22953 / PM1)</name>
    <dbReference type="NCBI Taxonomy" id="420662"/>
    <lineage>
        <taxon>Bacteria</taxon>
        <taxon>Pseudomonadati</taxon>
        <taxon>Pseudomonadota</taxon>
        <taxon>Betaproteobacteria</taxon>
        <taxon>Burkholderiales</taxon>
        <taxon>Sphaerotilaceae</taxon>
        <taxon>Methylibium</taxon>
    </lineage>
</organism>
<reference key="1">
    <citation type="journal article" date="2007" name="J. Bacteriol.">
        <title>Whole-genome analysis of the methyl tert-butyl ether-degrading beta-proteobacterium Methylibium petroleiphilum PM1.</title>
        <authorList>
            <person name="Kane S.R."/>
            <person name="Chakicherla A.Y."/>
            <person name="Chain P.S.G."/>
            <person name="Schmidt R."/>
            <person name="Shin M.W."/>
            <person name="Legler T.C."/>
            <person name="Scow K.M."/>
            <person name="Larimer F.W."/>
            <person name="Lucas S.M."/>
            <person name="Richardson P.M."/>
            <person name="Hristova K.R."/>
        </authorList>
    </citation>
    <scope>NUCLEOTIDE SEQUENCE [LARGE SCALE GENOMIC DNA]</scope>
    <source>
        <strain>ATCC BAA-1232 / LMG 22953 / PM1</strain>
    </source>
</reference>
<protein>
    <recommendedName>
        <fullName evidence="1">Large ribosomal subunit protein uL15</fullName>
    </recommendedName>
    <alternativeName>
        <fullName evidence="3">50S ribosomal protein L15</fullName>
    </alternativeName>
</protein>
<sequence>MELNTIKPASGAKHAKRRVGRGIGSGLGKTAGRGHKGQKSRAGGYHKVGFEGGQMPLQRRLPKRGFKSLTLKYNAEVTLADLQVLAADEVDVPTLKQAGLVGERAKVVKVIKSGELSKKVVLKGIGATAGAKAAIEAAGGSVA</sequence>
<comment type="function">
    <text evidence="1">Binds to the 23S rRNA.</text>
</comment>
<comment type="subunit">
    <text evidence="1">Part of the 50S ribosomal subunit.</text>
</comment>
<comment type="similarity">
    <text evidence="1">Belongs to the universal ribosomal protein uL15 family.</text>
</comment>
<gene>
    <name evidence="1" type="primary">rplO</name>
    <name type="ordered locus">Mpe_A3424</name>
</gene>
<feature type="chain" id="PRO_1000054493" description="Large ribosomal subunit protein uL15">
    <location>
        <begin position="1"/>
        <end position="143"/>
    </location>
</feature>
<feature type="region of interest" description="Disordered" evidence="2">
    <location>
        <begin position="1"/>
        <end position="51"/>
    </location>
</feature>
<feature type="compositionally biased region" description="Gly residues" evidence="2">
    <location>
        <begin position="21"/>
        <end position="31"/>
    </location>
</feature>
<evidence type="ECO:0000255" key="1">
    <source>
        <dbReference type="HAMAP-Rule" id="MF_01341"/>
    </source>
</evidence>
<evidence type="ECO:0000256" key="2">
    <source>
        <dbReference type="SAM" id="MobiDB-lite"/>
    </source>
</evidence>
<evidence type="ECO:0000305" key="3"/>
<dbReference type="EMBL" id="CP000555">
    <property type="protein sequence ID" value="ABM96377.1"/>
    <property type="molecule type" value="Genomic_DNA"/>
</dbReference>
<dbReference type="RefSeq" id="WP_011830998.1">
    <property type="nucleotide sequence ID" value="NC_008825.1"/>
</dbReference>
<dbReference type="SMR" id="A2SLD8"/>
<dbReference type="STRING" id="420662.Mpe_A3424"/>
<dbReference type="KEGG" id="mpt:Mpe_A3424"/>
<dbReference type="eggNOG" id="COG0200">
    <property type="taxonomic scope" value="Bacteria"/>
</dbReference>
<dbReference type="HOGENOM" id="CLU_055188_4_2_4"/>
<dbReference type="Proteomes" id="UP000000366">
    <property type="component" value="Chromosome"/>
</dbReference>
<dbReference type="GO" id="GO:0022625">
    <property type="term" value="C:cytosolic large ribosomal subunit"/>
    <property type="evidence" value="ECO:0007669"/>
    <property type="project" value="TreeGrafter"/>
</dbReference>
<dbReference type="GO" id="GO:0019843">
    <property type="term" value="F:rRNA binding"/>
    <property type="evidence" value="ECO:0007669"/>
    <property type="project" value="UniProtKB-UniRule"/>
</dbReference>
<dbReference type="GO" id="GO:0003735">
    <property type="term" value="F:structural constituent of ribosome"/>
    <property type="evidence" value="ECO:0007669"/>
    <property type="project" value="InterPro"/>
</dbReference>
<dbReference type="GO" id="GO:0006412">
    <property type="term" value="P:translation"/>
    <property type="evidence" value="ECO:0007669"/>
    <property type="project" value="UniProtKB-UniRule"/>
</dbReference>
<dbReference type="Gene3D" id="3.100.10.10">
    <property type="match status" value="1"/>
</dbReference>
<dbReference type="HAMAP" id="MF_01341">
    <property type="entry name" value="Ribosomal_uL15"/>
    <property type="match status" value="1"/>
</dbReference>
<dbReference type="InterPro" id="IPR030878">
    <property type="entry name" value="Ribosomal_uL15"/>
</dbReference>
<dbReference type="InterPro" id="IPR021131">
    <property type="entry name" value="Ribosomal_uL15/eL18"/>
</dbReference>
<dbReference type="InterPro" id="IPR036227">
    <property type="entry name" value="Ribosomal_uL15/eL18_sf"/>
</dbReference>
<dbReference type="InterPro" id="IPR005749">
    <property type="entry name" value="Ribosomal_uL15_bac-type"/>
</dbReference>
<dbReference type="NCBIfam" id="TIGR01071">
    <property type="entry name" value="rplO_bact"/>
    <property type="match status" value="1"/>
</dbReference>
<dbReference type="PANTHER" id="PTHR12934">
    <property type="entry name" value="50S RIBOSOMAL PROTEIN L15"/>
    <property type="match status" value="1"/>
</dbReference>
<dbReference type="PANTHER" id="PTHR12934:SF11">
    <property type="entry name" value="LARGE RIBOSOMAL SUBUNIT PROTEIN UL15M"/>
    <property type="match status" value="1"/>
</dbReference>
<dbReference type="Pfam" id="PF00828">
    <property type="entry name" value="Ribosomal_L27A"/>
    <property type="match status" value="1"/>
</dbReference>
<dbReference type="SUPFAM" id="SSF52080">
    <property type="entry name" value="Ribosomal proteins L15p and L18e"/>
    <property type="match status" value="1"/>
</dbReference>